<name>ATG4_PICGU</name>
<keyword id="KW-0072">Autophagy</keyword>
<keyword id="KW-0963">Cytoplasm</keyword>
<keyword id="KW-0378">Hydrolase</keyword>
<keyword id="KW-0539">Nucleus</keyword>
<keyword id="KW-0645">Protease</keyword>
<keyword id="KW-0653">Protein transport</keyword>
<keyword id="KW-1185">Reference proteome</keyword>
<keyword id="KW-0788">Thiol protease</keyword>
<keyword id="KW-0813">Transport</keyword>
<dbReference type="EC" id="3.4.22.-"/>
<dbReference type="EMBL" id="CH408156">
    <property type="protein sequence ID" value="EDK37561.2"/>
    <property type="molecule type" value="Genomic_DNA"/>
</dbReference>
<dbReference type="RefSeq" id="XP_001485988.1">
    <property type="nucleotide sequence ID" value="XM_001485938.1"/>
</dbReference>
<dbReference type="SMR" id="A5DEF7"/>
<dbReference type="FunCoup" id="A5DEF7">
    <property type="interactions" value="315"/>
</dbReference>
<dbReference type="STRING" id="294746.A5DEF7"/>
<dbReference type="MEROPS" id="C54.001"/>
<dbReference type="GeneID" id="5127478"/>
<dbReference type="KEGG" id="pgu:PGUG_01658"/>
<dbReference type="VEuPathDB" id="FungiDB:PGUG_01658"/>
<dbReference type="eggNOG" id="KOG2674">
    <property type="taxonomic scope" value="Eukaryota"/>
</dbReference>
<dbReference type="HOGENOM" id="CLU_021259_5_2_1"/>
<dbReference type="InParanoid" id="A5DEF7"/>
<dbReference type="OMA" id="PDETFHC"/>
<dbReference type="OrthoDB" id="2960936at2759"/>
<dbReference type="Proteomes" id="UP000001997">
    <property type="component" value="Unassembled WGS sequence"/>
</dbReference>
<dbReference type="GO" id="GO:0005634">
    <property type="term" value="C:nucleus"/>
    <property type="evidence" value="ECO:0007669"/>
    <property type="project" value="UniProtKB-SubCell"/>
</dbReference>
<dbReference type="GO" id="GO:0000407">
    <property type="term" value="C:phagophore assembly site"/>
    <property type="evidence" value="ECO:0007669"/>
    <property type="project" value="UniProtKB-SubCell"/>
</dbReference>
<dbReference type="GO" id="GO:0004197">
    <property type="term" value="F:cysteine-type endopeptidase activity"/>
    <property type="evidence" value="ECO:0007669"/>
    <property type="project" value="TreeGrafter"/>
</dbReference>
<dbReference type="GO" id="GO:0019786">
    <property type="term" value="F:protein-phosphatidylethanolamide deconjugating activity"/>
    <property type="evidence" value="ECO:0007669"/>
    <property type="project" value="InterPro"/>
</dbReference>
<dbReference type="GO" id="GO:0035973">
    <property type="term" value="P:aggrephagy"/>
    <property type="evidence" value="ECO:0007669"/>
    <property type="project" value="TreeGrafter"/>
</dbReference>
<dbReference type="GO" id="GO:0000045">
    <property type="term" value="P:autophagosome assembly"/>
    <property type="evidence" value="ECO:0007669"/>
    <property type="project" value="TreeGrafter"/>
</dbReference>
<dbReference type="GO" id="GO:0000423">
    <property type="term" value="P:mitophagy"/>
    <property type="evidence" value="ECO:0007669"/>
    <property type="project" value="TreeGrafter"/>
</dbReference>
<dbReference type="GO" id="GO:0034727">
    <property type="term" value="P:piecemeal microautophagy of the nucleus"/>
    <property type="evidence" value="ECO:0007669"/>
    <property type="project" value="TreeGrafter"/>
</dbReference>
<dbReference type="GO" id="GO:0016485">
    <property type="term" value="P:protein processing"/>
    <property type="evidence" value="ECO:0007669"/>
    <property type="project" value="TreeGrafter"/>
</dbReference>
<dbReference type="GO" id="GO:0015031">
    <property type="term" value="P:protein transport"/>
    <property type="evidence" value="ECO:0007669"/>
    <property type="project" value="UniProtKB-KW"/>
</dbReference>
<dbReference type="InterPro" id="IPR038765">
    <property type="entry name" value="Papain-like_cys_pep_sf"/>
</dbReference>
<dbReference type="InterPro" id="IPR005078">
    <property type="entry name" value="Peptidase_C54"/>
</dbReference>
<dbReference type="InterPro" id="IPR046792">
    <property type="entry name" value="Peptidase_C54_cat"/>
</dbReference>
<dbReference type="PANTHER" id="PTHR22624:SF49">
    <property type="entry name" value="CYSTEINE PROTEASE"/>
    <property type="match status" value="1"/>
</dbReference>
<dbReference type="PANTHER" id="PTHR22624">
    <property type="entry name" value="CYSTEINE PROTEASE ATG4"/>
    <property type="match status" value="1"/>
</dbReference>
<dbReference type="Pfam" id="PF03416">
    <property type="entry name" value="Peptidase_C54"/>
    <property type="match status" value="1"/>
</dbReference>
<dbReference type="SUPFAM" id="SSF54001">
    <property type="entry name" value="Cysteine proteinases"/>
    <property type="match status" value="1"/>
</dbReference>
<sequence>MTWDTKNQFETTKTSQELPATSQDHISDNKMNSEPSHRLSQFWSSLTRSSSESITAEPVVILGHTYREGDRDREGDSEVQKQVKKRYWMSYRSGFEPIKKHEDGPSPLSFVQSMIFNKNVGNTFANIHSLVDNDNFTTDVGWGCMIRTSQSVLANAIDRAGYEVDVELFADTSSAAFSLHNFVKVASDSPLRVRPGQWFGPSAASLSIKRLCEARNSSTNVPLSVLVCESGDIYDDQIQTFPVLLLLPLRLGIDHVNNVYHSSLLQLLEVPQSAGIAGGKPSSSLYFFGYQGTSLLYLDPHYPQNVSAGVGSYHSSSYQKLDISDMDPSMMAGIVLKNNEDYTDLKRRTTGNKIIHFHEARNYNDYVEVEREDFIDLGQNNRSATAGAEADFDSESSMVIVD</sequence>
<organism>
    <name type="scientific">Meyerozyma guilliermondii (strain ATCC 6260 / CBS 566 / DSM 6381 / JCM 1539 / NBRC 10279 / NRRL Y-324)</name>
    <name type="common">Yeast</name>
    <name type="synonym">Candida guilliermondii</name>
    <dbReference type="NCBI Taxonomy" id="294746"/>
    <lineage>
        <taxon>Eukaryota</taxon>
        <taxon>Fungi</taxon>
        <taxon>Dikarya</taxon>
        <taxon>Ascomycota</taxon>
        <taxon>Saccharomycotina</taxon>
        <taxon>Pichiomycetes</taxon>
        <taxon>Debaryomycetaceae</taxon>
        <taxon>Meyerozyma</taxon>
    </lineage>
</organism>
<comment type="function">
    <text evidence="1">Cysteine protease that plays a key role in cytoplasm to vacuole transport (Cvt) and autophagy by mediating both proteolytic activation and delipidation of ATG8. Required for selective autophagic degradation of the nucleus (nucleophagy) as well as for mitophagy which contributes to regulate mitochondrial quantity and quality by eliminating the mitochondria to a basal level to fulfill cellular energy requirements and preventing excess ROS production. The protease activity is required for proteolytic activation of ATG8: cleaves the C-terminal amino acid of ATG8 to reveal a C-terminal glycine. ATG8 ubiquitin-like activity requires the exposure of the glycine at the C-terminus for its conjugation to phosphatidylethanolamine (PE) and its insertion to membranes, which is necessary for autophagy. The ATG8-PE conjugate mediates tethering between adjacent membranes and stimulates membrane hemifusion, leading to expansion of the autophagosomal membrane during autophagy. In addition to the protease activity, also catalyzes deconjugation of PE-conjugated forms of ATG8 during macroautophagy: ATG8 delipidation is required to release the protein from membranes, which facilitates multiple events during macroautophagy, and especially for efficient autophagosome biogenesis, the assembly of ATG9-containing tubulovesicular clusters into phagophores/autophagosomes, and for the disassembly of PAS-associated ATG components. ATG8 delipidation by ATG4 also recycles ATG8-PE generated on inappropriate membranes to maintain a reservoir of unlipidated ATG8 that is required for autophagosome formation at the PAS.</text>
</comment>
<comment type="catalytic activity">
    <reaction evidence="1">
        <text>[protein]-C-terminal L-amino acid-glycyl-phosphatidylethanolamide + H2O = [protein]-C-terminal L-amino acid-glycine + a 1,2-diacyl-sn-glycero-3-phosphoethanolamine</text>
        <dbReference type="Rhea" id="RHEA:67548"/>
        <dbReference type="Rhea" id="RHEA-COMP:17323"/>
        <dbReference type="Rhea" id="RHEA-COMP:17324"/>
        <dbReference type="ChEBI" id="CHEBI:15377"/>
        <dbReference type="ChEBI" id="CHEBI:64612"/>
        <dbReference type="ChEBI" id="CHEBI:172940"/>
        <dbReference type="ChEBI" id="CHEBI:172941"/>
    </reaction>
    <physiologicalReaction direction="left-to-right" evidence="1">
        <dbReference type="Rhea" id="RHEA:67549"/>
    </physiologicalReaction>
</comment>
<comment type="subcellular location">
    <subcellularLocation>
        <location evidence="1">Cytoplasm</location>
    </subcellularLocation>
    <subcellularLocation>
        <location evidence="1">Nucleus</location>
    </subcellularLocation>
    <subcellularLocation>
        <location evidence="1">Preautophagosomal structure</location>
    </subcellularLocation>
</comment>
<comment type="similarity">
    <text evidence="4">Belongs to the peptidase C54 family.</text>
</comment>
<reference key="1">
    <citation type="journal article" date="2009" name="Nature">
        <title>Evolution of pathogenicity and sexual reproduction in eight Candida genomes.</title>
        <authorList>
            <person name="Butler G."/>
            <person name="Rasmussen M.D."/>
            <person name="Lin M.F."/>
            <person name="Santos M.A.S."/>
            <person name="Sakthikumar S."/>
            <person name="Munro C.A."/>
            <person name="Rheinbay E."/>
            <person name="Grabherr M."/>
            <person name="Forche A."/>
            <person name="Reedy J.L."/>
            <person name="Agrafioti I."/>
            <person name="Arnaud M.B."/>
            <person name="Bates S."/>
            <person name="Brown A.J.P."/>
            <person name="Brunke S."/>
            <person name="Costanzo M.C."/>
            <person name="Fitzpatrick D.A."/>
            <person name="de Groot P.W.J."/>
            <person name="Harris D."/>
            <person name="Hoyer L.L."/>
            <person name="Hube B."/>
            <person name="Klis F.M."/>
            <person name="Kodira C."/>
            <person name="Lennard N."/>
            <person name="Logue M.E."/>
            <person name="Martin R."/>
            <person name="Neiman A.M."/>
            <person name="Nikolaou E."/>
            <person name="Quail M.A."/>
            <person name="Quinn J."/>
            <person name="Santos M.C."/>
            <person name="Schmitzberger F.F."/>
            <person name="Sherlock G."/>
            <person name="Shah P."/>
            <person name="Silverstein K.A.T."/>
            <person name="Skrzypek M.S."/>
            <person name="Soll D."/>
            <person name="Staggs R."/>
            <person name="Stansfield I."/>
            <person name="Stumpf M.P.H."/>
            <person name="Sudbery P.E."/>
            <person name="Srikantha T."/>
            <person name="Zeng Q."/>
            <person name="Berman J."/>
            <person name="Berriman M."/>
            <person name="Heitman J."/>
            <person name="Gow N.A.R."/>
            <person name="Lorenz M.C."/>
            <person name="Birren B.W."/>
            <person name="Kellis M."/>
            <person name="Cuomo C.A."/>
        </authorList>
    </citation>
    <scope>NUCLEOTIDE SEQUENCE [LARGE SCALE GENOMIC DNA]</scope>
    <source>
        <strain>ATCC 6260 / CBS 566 / DSM 6381 / JCM 1539 / NBRC 10279 / NRRL Y-324</strain>
    </source>
</reference>
<accession>A5DEF7</accession>
<evidence type="ECO:0000250" key="1">
    <source>
        <dbReference type="UniProtKB" id="P53867"/>
    </source>
</evidence>
<evidence type="ECO:0000250" key="2">
    <source>
        <dbReference type="UniProtKB" id="Q9Y4P1"/>
    </source>
</evidence>
<evidence type="ECO:0000256" key="3">
    <source>
        <dbReference type="SAM" id="MobiDB-lite"/>
    </source>
</evidence>
<evidence type="ECO:0000305" key="4"/>
<proteinExistence type="inferred from homology"/>
<protein>
    <recommendedName>
        <fullName>Probable cysteine protease ATG4</fullName>
        <ecNumber>3.4.22.-</ecNumber>
    </recommendedName>
    <alternativeName>
        <fullName>Autophagy-related protein 4</fullName>
    </alternativeName>
</protein>
<feature type="chain" id="PRO_0000317843" description="Probable cysteine protease ATG4">
    <location>
        <begin position="1"/>
        <end position="402"/>
    </location>
</feature>
<feature type="region of interest" description="Disordered" evidence="3">
    <location>
        <begin position="1"/>
        <end position="38"/>
    </location>
</feature>
<feature type="active site" description="Nucleophile" evidence="2">
    <location>
        <position position="144"/>
    </location>
</feature>
<feature type="active site" evidence="2">
    <location>
        <position position="299"/>
    </location>
</feature>
<feature type="active site" evidence="2">
    <location>
        <position position="301"/>
    </location>
</feature>
<gene>
    <name type="primary">ATG4</name>
    <name type="ORF">PGUG_01658</name>
</gene>